<organism>
    <name type="scientific">Gluconacetobacter diazotrophicus (strain ATCC 49037 / DSM 5601 / CCUG 37298 / CIP 103539 / LMG 7603 / PAl5)</name>
    <dbReference type="NCBI Taxonomy" id="272568"/>
    <lineage>
        <taxon>Bacteria</taxon>
        <taxon>Pseudomonadati</taxon>
        <taxon>Pseudomonadota</taxon>
        <taxon>Alphaproteobacteria</taxon>
        <taxon>Acetobacterales</taxon>
        <taxon>Acetobacteraceae</taxon>
        <taxon>Gluconacetobacter</taxon>
    </lineage>
</organism>
<name>RL10_GLUDA</name>
<reference key="1">
    <citation type="journal article" date="2009" name="BMC Genomics">
        <title>Complete genome sequence of the sugarcane nitrogen-fixing endophyte Gluconacetobacter diazotrophicus Pal5.</title>
        <authorList>
            <person name="Bertalan M."/>
            <person name="Albano R."/>
            <person name="de Padua V."/>
            <person name="Rouws L."/>
            <person name="Rojas C."/>
            <person name="Hemerly A."/>
            <person name="Teixeira K."/>
            <person name="Schwab S."/>
            <person name="Araujo J."/>
            <person name="Oliveira A."/>
            <person name="Franca L."/>
            <person name="Magalhaes V."/>
            <person name="Alqueres S."/>
            <person name="Cardoso A."/>
            <person name="Almeida W."/>
            <person name="Loureiro M.M."/>
            <person name="Nogueira E."/>
            <person name="Cidade D."/>
            <person name="Oliveira D."/>
            <person name="Simao T."/>
            <person name="Macedo J."/>
            <person name="Valadao A."/>
            <person name="Dreschsel M."/>
            <person name="Freitas F."/>
            <person name="Vidal M."/>
            <person name="Guedes H."/>
            <person name="Rodrigues E."/>
            <person name="Meneses C."/>
            <person name="Brioso P."/>
            <person name="Pozzer L."/>
            <person name="Figueiredo D."/>
            <person name="Montano H."/>
            <person name="Junior J."/>
            <person name="de Souza Filho G."/>
            <person name="Martin Quintana Flores V."/>
            <person name="Ferreira B."/>
            <person name="Branco A."/>
            <person name="Gonzalez P."/>
            <person name="Guillobel H."/>
            <person name="Lemos M."/>
            <person name="Seibel L."/>
            <person name="Macedo J."/>
            <person name="Alves-Ferreira M."/>
            <person name="Sachetto-Martins G."/>
            <person name="Coelho A."/>
            <person name="Santos E."/>
            <person name="Amaral G."/>
            <person name="Neves A."/>
            <person name="Pacheco A.B."/>
            <person name="Carvalho D."/>
            <person name="Lery L."/>
            <person name="Bisch P."/>
            <person name="Rossle S.C."/>
            <person name="Urmenyi T."/>
            <person name="Rael Pereira A."/>
            <person name="Silva R."/>
            <person name="Rondinelli E."/>
            <person name="von Kruger W."/>
            <person name="Martins O."/>
            <person name="Baldani J.I."/>
            <person name="Ferreira P.C."/>
        </authorList>
    </citation>
    <scope>NUCLEOTIDE SEQUENCE [LARGE SCALE GENOMIC DNA]</scope>
    <source>
        <strain>ATCC 49037 / DSM 5601 / CCUG 37298 / CIP 103539 / LMG 7603 / PAl5</strain>
    </source>
</reference>
<reference key="2">
    <citation type="journal article" date="2010" name="Stand. Genomic Sci.">
        <title>Two genome sequences of the same bacterial strain, Gluconacetobacter diazotrophicus PAl 5, suggest a new standard in genome sequence submission.</title>
        <authorList>
            <person name="Giongo A."/>
            <person name="Tyler H.L."/>
            <person name="Zipperer U.N."/>
            <person name="Triplett E.W."/>
        </authorList>
    </citation>
    <scope>NUCLEOTIDE SEQUENCE [LARGE SCALE GENOMIC DNA]</scope>
    <source>
        <strain>ATCC 49037 / DSM 5601 / CCUG 37298 / CIP 103539 / LMG 7603 / PAl5</strain>
    </source>
</reference>
<dbReference type="EMBL" id="AM889285">
    <property type="protein sequence ID" value="CAP57355.1"/>
    <property type="molecule type" value="Genomic_DNA"/>
</dbReference>
<dbReference type="EMBL" id="CP001189">
    <property type="protein sequence ID" value="ACI52688.1"/>
    <property type="status" value="ALT_INIT"/>
    <property type="molecule type" value="Genomic_DNA"/>
</dbReference>
<dbReference type="RefSeq" id="WP_012554685.1">
    <property type="nucleotide sequence ID" value="NC_011365.1"/>
</dbReference>
<dbReference type="SMR" id="A9H3S7"/>
<dbReference type="STRING" id="272568.GDI3412"/>
<dbReference type="KEGG" id="gdi:GDI3412"/>
<dbReference type="KEGG" id="gdj:Gdia_2958"/>
<dbReference type="eggNOG" id="COG0244">
    <property type="taxonomic scope" value="Bacteria"/>
</dbReference>
<dbReference type="HOGENOM" id="CLU_092227_0_0_5"/>
<dbReference type="OrthoDB" id="9791972at2"/>
<dbReference type="Proteomes" id="UP000001176">
    <property type="component" value="Chromosome"/>
</dbReference>
<dbReference type="GO" id="GO:0015934">
    <property type="term" value="C:large ribosomal subunit"/>
    <property type="evidence" value="ECO:0007669"/>
    <property type="project" value="InterPro"/>
</dbReference>
<dbReference type="GO" id="GO:0070180">
    <property type="term" value="F:large ribosomal subunit rRNA binding"/>
    <property type="evidence" value="ECO:0007669"/>
    <property type="project" value="UniProtKB-UniRule"/>
</dbReference>
<dbReference type="GO" id="GO:0003735">
    <property type="term" value="F:structural constituent of ribosome"/>
    <property type="evidence" value="ECO:0007669"/>
    <property type="project" value="InterPro"/>
</dbReference>
<dbReference type="GO" id="GO:0006412">
    <property type="term" value="P:translation"/>
    <property type="evidence" value="ECO:0007669"/>
    <property type="project" value="UniProtKB-UniRule"/>
</dbReference>
<dbReference type="CDD" id="cd05797">
    <property type="entry name" value="Ribosomal_L10"/>
    <property type="match status" value="1"/>
</dbReference>
<dbReference type="Gene3D" id="3.30.70.1730">
    <property type="match status" value="1"/>
</dbReference>
<dbReference type="Gene3D" id="6.10.250.290">
    <property type="match status" value="1"/>
</dbReference>
<dbReference type="HAMAP" id="MF_00362">
    <property type="entry name" value="Ribosomal_uL10"/>
    <property type="match status" value="1"/>
</dbReference>
<dbReference type="InterPro" id="IPR001790">
    <property type="entry name" value="Ribosomal_uL10"/>
</dbReference>
<dbReference type="InterPro" id="IPR043141">
    <property type="entry name" value="Ribosomal_uL10-like_sf"/>
</dbReference>
<dbReference type="InterPro" id="IPR022973">
    <property type="entry name" value="Ribosomal_uL10_bac"/>
</dbReference>
<dbReference type="InterPro" id="IPR047865">
    <property type="entry name" value="Ribosomal_uL10_bac_type"/>
</dbReference>
<dbReference type="InterPro" id="IPR002363">
    <property type="entry name" value="Ribosomal_uL10_CS_bac"/>
</dbReference>
<dbReference type="NCBIfam" id="NF000955">
    <property type="entry name" value="PRK00099.1-1"/>
    <property type="match status" value="1"/>
</dbReference>
<dbReference type="PANTHER" id="PTHR11560">
    <property type="entry name" value="39S RIBOSOMAL PROTEIN L10, MITOCHONDRIAL"/>
    <property type="match status" value="1"/>
</dbReference>
<dbReference type="Pfam" id="PF00466">
    <property type="entry name" value="Ribosomal_L10"/>
    <property type="match status" value="1"/>
</dbReference>
<dbReference type="SUPFAM" id="SSF160369">
    <property type="entry name" value="Ribosomal protein L10-like"/>
    <property type="match status" value="1"/>
</dbReference>
<dbReference type="PROSITE" id="PS01109">
    <property type="entry name" value="RIBOSOMAL_L10"/>
    <property type="match status" value="1"/>
</dbReference>
<evidence type="ECO:0000255" key="1">
    <source>
        <dbReference type="HAMAP-Rule" id="MF_00362"/>
    </source>
</evidence>
<evidence type="ECO:0000305" key="2"/>
<keyword id="KW-1185">Reference proteome</keyword>
<keyword id="KW-0687">Ribonucleoprotein</keyword>
<keyword id="KW-0689">Ribosomal protein</keyword>
<keyword id="KW-0694">RNA-binding</keyword>
<keyword id="KW-0699">rRNA-binding</keyword>
<proteinExistence type="inferred from homology"/>
<sequence>MPGRSRRRRELDRTEKREFVASLAAVFAETSMVVVTRNDGLTVADATILRQRVRAAGATYKVAKNRLANLALAGTRFEGISPLLKGPTALSWSADPVAVAKVLVEFAKTNEKLVLLGGALGTQTLNVDGVKALAELPSLDTLRAQLVGLISTPATRIAGVLQAPAGQLARVFGAYAKKDEAA</sequence>
<accession>A9H3S7</accession>
<accession>B5ZIF5</accession>
<comment type="function">
    <text evidence="1">Forms part of the ribosomal stalk, playing a central role in the interaction of the ribosome with GTP-bound translation factors.</text>
</comment>
<comment type="subunit">
    <text evidence="1">Part of the ribosomal stalk of the 50S ribosomal subunit. The N-terminus interacts with L11 and the large rRNA to form the base of the stalk. The C-terminus forms an elongated spine to which L12 dimers bind in a sequential fashion forming a multimeric L10(L12)X complex.</text>
</comment>
<comment type="similarity">
    <text evidence="1">Belongs to the universal ribosomal protein uL10 family.</text>
</comment>
<comment type="sequence caution" evidence="2">
    <conflict type="erroneous initiation">
        <sequence resource="EMBL-CDS" id="ACI52688"/>
    </conflict>
</comment>
<feature type="chain" id="PRO_1000079545" description="Large ribosomal subunit protein uL10">
    <location>
        <begin position="1"/>
        <end position="182"/>
    </location>
</feature>
<gene>
    <name evidence="1" type="primary">rplJ</name>
    <name type="ordered locus">GDI3412</name>
    <name type="ordered locus">Gdia_2958</name>
</gene>
<protein>
    <recommendedName>
        <fullName evidence="1">Large ribosomal subunit protein uL10</fullName>
    </recommendedName>
    <alternativeName>
        <fullName evidence="2">50S ribosomal protein L10</fullName>
    </alternativeName>
</protein>